<evidence type="ECO:0000255" key="1">
    <source>
        <dbReference type="HAMAP-Rule" id="MF_01398"/>
    </source>
</evidence>
<accession>A9M8G1</accession>
<gene>
    <name evidence="1" type="primary">atpF2</name>
    <name type="ordered locus">BCAN_A0390</name>
</gene>
<name>ATPF2_BRUC2</name>
<keyword id="KW-0066">ATP synthesis</keyword>
<keyword id="KW-0997">Cell inner membrane</keyword>
<keyword id="KW-1003">Cell membrane</keyword>
<keyword id="KW-0138">CF(0)</keyword>
<keyword id="KW-0375">Hydrogen ion transport</keyword>
<keyword id="KW-0406">Ion transport</keyword>
<keyword id="KW-0472">Membrane</keyword>
<keyword id="KW-1185">Reference proteome</keyword>
<keyword id="KW-0812">Transmembrane</keyword>
<keyword id="KW-1133">Transmembrane helix</keyword>
<keyword id="KW-0813">Transport</keyword>
<comment type="function">
    <text evidence="1">F(1)F(0) ATP synthase produces ATP from ADP in the presence of a proton or sodium gradient. F-type ATPases consist of two structural domains, F(1) containing the extramembraneous catalytic core and F(0) containing the membrane proton channel, linked together by a central stalk and a peripheral stalk. During catalysis, ATP synthesis in the catalytic domain of F(1) is coupled via a rotary mechanism of the central stalk subunits to proton translocation.</text>
</comment>
<comment type="function">
    <text evidence="1">Component of the F(0) channel, it forms part of the peripheral stalk, linking F(1) to F(0).</text>
</comment>
<comment type="subunit">
    <text evidence="1">F-type ATPases have 2 components, F(1) - the catalytic core - and F(0) - the membrane proton channel. F(1) has five subunits: alpha(3), beta(3), gamma(1), delta(1), epsilon(1). F(0) has three main subunits: a(1), b(2) and c(10-14). The alpha and beta chains form an alternating ring which encloses part of the gamma chain. F(1) is attached to F(0) by a central stalk formed by the gamma and epsilon chains, while a peripheral stalk is formed by the delta and b chains.</text>
</comment>
<comment type="subcellular location">
    <subcellularLocation>
        <location evidence="1">Cell inner membrane</location>
        <topology evidence="1">Single-pass membrane protein</topology>
    </subcellularLocation>
</comment>
<comment type="similarity">
    <text evidence="1">Belongs to the ATPase B chain family.</text>
</comment>
<reference key="1">
    <citation type="submission" date="2007-10" db="EMBL/GenBank/DDBJ databases">
        <title>Brucella canis ATCC 23365 whole genome shotgun sequencing project.</title>
        <authorList>
            <person name="Setubal J.C."/>
            <person name="Bowns C."/>
            <person name="Boyle S."/>
            <person name="Crasta O.R."/>
            <person name="Czar M.J."/>
            <person name="Dharmanolla C."/>
            <person name="Gillespie J.J."/>
            <person name="Kenyon R.W."/>
            <person name="Lu J."/>
            <person name="Mane S."/>
            <person name="Mohapatra S."/>
            <person name="Nagrani S."/>
            <person name="Purkayastha A."/>
            <person name="Rajasimha H.K."/>
            <person name="Shallom J.M."/>
            <person name="Shallom S."/>
            <person name="Shukla M."/>
            <person name="Snyder E.E."/>
            <person name="Sobral B.W."/>
            <person name="Wattam A.R."/>
            <person name="Will R."/>
            <person name="Williams K."/>
            <person name="Yoo H."/>
            <person name="Bruce D."/>
            <person name="Detter C."/>
            <person name="Munk C."/>
            <person name="Brettin T.S."/>
        </authorList>
    </citation>
    <scope>NUCLEOTIDE SEQUENCE [LARGE SCALE GENOMIC DNA]</scope>
    <source>
        <strain>ATCC 23365 / NCTC 10854 / RM-666</strain>
    </source>
</reference>
<organism>
    <name type="scientific">Brucella canis (strain ATCC 23365 / NCTC 10854 / RM-666)</name>
    <dbReference type="NCBI Taxonomy" id="483179"/>
    <lineage>
        <taxon>Bacteria</taxon>
        <taxon>Pseudomonadati</taxon>
        <taxon>Pseudomonadota</taxon>
        <taxon>Alphaproteobacteria</taxon>
        <taxon>Hyphomicrobiales</taxon>
        <taxon>Brucellaceae</taxon>
        <taxon>Brucella/Ochrobactrum group</taxon>
        <taxon>Brucella</taxon>
    </lineage>
</organism>
<sequence length="159" mass="17522">MDATFWAFIALVIFVVIVVYMKVPGMIGRTLDERADRIKKELEEARTLREEAQQLLAEYHRKRKEAEKEAGDIVASAEREAKALLEEAKRATEEYVARRNKLAEQKIATAETDAINAVRASAVDLAVAAAGSILAEKVDAKAAGNLFNDALAQVKSHLN</sequence>
<feature type="chain" id="PRO_0000368370" description="ATP synthase subunit b 2">
    <location>
        <begin position="1"/>
        <end position="159"/>
    </location>
</feature>
<feature type="transmembrane region" description="Helical" evidence="1">
    <location>
        <begin position="1"/>
        <end position="21"/>
    </location>
</feature>
<dbReference type="EMBL" id="CP000872">
    <property type="protein sequence ID" value="ABX61477.1"/>
    <property type="molecule type" value="Genomic_DNA"/>
</dbReference>
<dbReference type="RefSeq" id="WP_004690581.1">
    <property type="nucleotide sequence ID" value="NC_010103.1"/>
</dbReference>
<dbReference type="SMR" id="A9M8G1"/>
<dbReference type="GeneID" id="55590152"/>
<dbReference type="KEGG" id="bcs:BCAN_A0390"/>
<dbReference type="HOGENOM" id="CLU_079215_6_1_5"/>
<dbReference type="PhylomeDB" id="A9M8G1"/>
<dbReference type="Proteomes" id="UP000001385">
    <property type="component" value="Chromosome I"/>
</dbReference>
<dbReference type="GO" id="GO:0005886">
    <property type="term" value="C:plasma membrane"/>
    <property type="evidence" value="ECO:0007669"/>
    <property type="project" value="UniProtKB-SubCell"/>
</dbReference>
<dbReference type="GO" id="GO:0045259">
    <property type="term" value="C:proton-transporting ATP synthase complex"/>
    <property type="evidence" value="ECO:0007669"/>
    <property type="project" value="UniProtKB-KW"/>
</dbReference>
<dbReference type="GO" id="GO:0046933">
    <property type="term" value="F:proton-transporting ATP synthase activity, rotational mechanism"/>
    <property type="evidence" value="ECO:0007669"/>
    <property type="project" value="UniProtKB-UniRule"/>
</dbReference>
<dbReference type="GO" id="GO:0046961">
    <property type="term" value="F:proton-transporting ATPase activity, rotational mechanism"/>
    <property type="evidence" value="ECO:0007669"/>
    <property type="project" value="TreeGrafter"/>
</dbReference>
<dbReference type="CDD" id="cd06503">
    <property type="entry name" value="ATP-synt_Fo_b"/>
    <property type="match status" value="1"/>
</dbReference>
<dbReference type="HAMAP" id="MF_01398">
    <property type="entry name" value="ATP_synth_b_bprime"/>
    <property type="match status" value="1"/>
</dbReference>
<dbReference type="InterPro" id="IPR002146">
    <property type="entry name" value="ATP_synth_b/b'su_bac/chlpt"/>
</dbReference>
<dbReference type="InterPro" id="IPR050059">
    <property type="entry name" value="ATP_synthase_B_chain"/>
</dbReference>
<dbReference type="NCBIfam" id="NF006611">
    <property type="entry name" value="PRK09173.1"/>
    <property type="match status" value="1"/>
</dbReference>
<dbReference type="PANTHER" id="PTHR33445:SF1">
    <property type="entry name" value="ATP SYNTHASE SUBUNIT B"/>
    <property type="match status" value="1"/>
</dbReference>
<dbReference type="PANTHER" id="PTHR33445">
    <property type="entry name" value="ATP SYNTHASE SUBUNIT B', CHLOROPLASTIC"/>
    <property type="match status" value="1"/>
</dbReference>
<dbReference type="Pfam" id="PF00430">
    <property type="entry name" value="ATP-synt_B"/>
    <property type="match status" value="1"/>
</dbReference>
<protein>
    <recommendedName>
        <fullName evidence="1">ATP synthase subunit b 2</fullName>
    </recommendedName>
    <alternativeName>
        <fullName evidence="1">ATP synthase F(0) sector subunit b 2</fullName>
    </alternativeName>
    <alternativeName>
        <fullName evidence="1">ATPase subunit I 2</fullName>
    </alternativeName>
    <alternativeName>
        <fullName evidence="1">F-type ATPase subunit b 2</fullName>
        <shortName evidence="1">F-ATPase subunit b 2</shortName>
    </alternativeName>
</protein>
<proteinExistence type="inferred from homology"/>